<keyword id="KW-0028">Amino-acid biosynthesis</keyword>
<keyword id="KW-0963">Cytoplasm</keyword>
<keyword id="KW-0220">Diaminopimelate biosynthesis</keyword>
<keyword id="KW-0457">Lysine biosynthesis</keyword>
<keyword id="KW-0520">NAD</keyword>
<keyword id="KW-0521">NADP</keyword>
<keyword id="KW-0560">Oxidoreductase</keyword>
<keyword id="KW-1185">Reference proteome</keyword>
<proteinExistence type="inferred from homology"/>
<dbReference type="EC" id="1.17.1.8" evidence="1"/>
<dbReference type="EMBL" id="BA000021">
    <property type="protein sequence ID" value="BAC24171.1"/>
    <property type="molecule type" value="Genomic_DNA"/>
</dbReference>
<dbReference type="SMR" id="Q8D3H6"/>
<dbReference type="STRING" id="36870.gene:10368503"/>
<dbReference type="KEGG" id="wbr:dapB"/>
<dbReference type="eggNOG" id="COG0289">
    <property type="taxonomic scope" value="Bacteria"/>
</dbReference>
<dbReference type="HOGENOM" id="CLU_047479_2_1_6"/>
<dbReference type="OrthoDB" id="9790352at2"/>
<dbReference type="UniPathway" id="UPA00034">
    <property type="reaction ID" value="UER00018"/>
</dbReference>
<dbReference type="Proteomes" id="UP000000562">
    <property type="component" value="Chromosome"/>
</dbReference>
<dbReference type="GO" id="GO:0005829">
    <property type="term" value="C:cytosol"/>
    <property type="evidence" value="ECO:0007669"/>
    <property type="project" value="TreeGrafter"/>
</dbReference>
<dbReference type="GO" id="GO:0008839">
    <property type="term" value="F:4-hydroxy-tetrahydrodipicolinate reductase"/>
    <property type="evidence" value="ECO:0007669"/>
    <property type="project" value="UniProtKB-EC"/>
</dbReference>
<dbReference type="GO" id="GO:0051287">
    <property type="term" value="F:NAD binding"/>
    <property type="evidence" value="ECO:0007669"/>
    <property type="project" value="UniProtKB-UniRule"/>
</dbReference>
<dbReference type="GO" id="GO:0050661">
    <property type="term" value="F:NADP binding"/>
    <property type="evidence" value="ECO:0007669"/>
    <property type="project" value="UniProtKB-UniRule"/>
</dbReference>
<dbReference type="GO" id="GO:0016726">
    <property type="term" value="F:oxidoreductase activity, acting on CH or CH2 groups, NAD or NADP as acceptor"/>
    <property type="evidence" value="ECO:0007669"/>
    <property type="project" value="UniProtKB-UniRule"/>
</dbReference>
<dbReference type="GO" id="GO:0019877">
    <property type="term" value="P:diaminopimelate biosynthetic process"/>
    <property type="evidence" value="ECO:0007669"/>
    <property type="project" value="UniProtKB-UniRule"/>
</dbReference>
<dbReference type="GO" id="GO:0009089">
    <property type="term" value="P:lysine biosynthetic process via diaminopimelate"/>
    <property type="evidence" value="ECO:0007669"/>
    <property type="project" value="UniProtKB-UniRule"/>
</dbReference>
<dbReference type="CDD" id="cd02274">
    <property type="entry name" value="DHDPR_N"/>
    <property type="match status" value="1"/>
</dbReference>
<dbReference type="Gene3D" id="3.30.360.10">
    <property type="entry name" value="Dihydrodipicolinate Reductase, domain 2"/>
    <property type="match status" value="1"/>
</dbReference>
<dbReference type="Gene3D" id="3.40.50.720">
    <property type="entry name" value="NAD(P)-binding Rossmann-like Domain"/>
    <property type="match status" value="1"/>
</dbReference>
<dbReference type="HAMAP" id="MF_00102">
    <property type="entry name" value="DapB"/>
    <property type="match status" value="1"/>
</dbReference>
<dbReference type="InterPro" id="IPR022663">
    <property type="entry name" value="DapB_C"/>
</dbReference>
<dbReference type="InterPro" id="IPR000846">
    <property type="entry name" value="DapB_N"/>
</dbReference>
<dbReference type="InterPro" id="IPR022664">
    <property type="entry name" value="DapB_N_CS"/>
</dbReference>
<dbReference type="InterPro" id="IPR023940">
    <property type="entry name" value="DHDPR_bac"/>
</dbReference>
<dbReference type="InterPro" id="IPR036291">
    <property type="entry name" value="NAD(P)-bd_dom_sf"/>
</dbReference>
<dbReference type="NCBIfam" id="TIGR00036">
    <property type="entry name" value="dapB"/>
    <property type="match status" value="1"/>
</dbReference>
<dbReference type="PANTHER" id="PTHR20836:SF0">
    <property type="entry name" value="4-HYDROXY-TETRAHYDRODIPICOLINATE REDUCTASE 1, CHLOROPLASTIC-RELATED"/>
    <property type="match status" value="1"/>
</dbReference>
<dbReference type="PANTHER" id="PTHR20836">
    <property type="entry name" value="DIHYDRODIPICOLINATE REDUCTASE"/>
    <property type="match status" value="1"/>
</dbReference>
<dbReference type="Pfam" id="PF05173">
    <property type="entry name" value="DapB_C"/>
    <property type="match status" value="1"/>
</dbReference>
<dbReference type="Pfam" id="PF01113">
    <property type="entry name" value="DapB_N"/>
    <property type="match status" value="1"/>
</dbReference>
<dbReference type="PIRSF" id="PIRSF000161">
    <property type="entry name" value="DHPR"/>
    <property type="match status" value="1"/>
</dbReference>
<dbReference type="SUPFAM" id="SSF55347">
    <property type="entry name" value="Glyceraldehyde-3-phosphate dehydrogenase-like, C-terminal domain"/>
    <property type="match status" value="1"/>
</dbReference>
<dbReference type="SUPFAM" id="SSF51735">
    <property type="entry name" value="NAD(P)-binding Rossmann-fold domains"/>
    <property type="match status" value="1"/>
</dbReference>
<dbReference type="PROSITE" id="PS01298">
    <property type="entry name" value="DAPB"/>
    <property type="match status" value="1"/>
</dbReference>
<reference key="1">
    <citation type="journal article" date="2002" name="Nat. Genet.">
        <title>Genome sequence of the endocellular obligate symbiont of tsetse flies, Wigglesworthia glossinidia.</title>
        <authorList>
            <person name="Akman L."/>
            <person name="Yamashita A."/>
            <person name="Watanabe H."/>
            <person name="Oshima K."/>
            <person name="Shiba T."/>
            <person name="Hattori M."/>
            <person name="Aksoy S."/>
        </authorList>
    </citation>
    <scope>NUCLEOTIDE SEQUENCE [LARGE SCALE GENOMIC DNA]</scope>
</reference>
<sequence length="265" mass="29926">MKNNKKISSIRIATTGANGKMGKQITRTAINISKIIHTSSLVRHKSSFKNYDIGKLANIFPIGVFTNDNIKDISDKFDVLIDFTSVKSSLEYLNFCYKNKKKMVIGTTGFNAMQNKLIKHMSKKIAIFYSENFSFGANIIFRLLKNISSIGNIKNIDIDIIECHHKEKSDIPSATSILIKKNILKNLKIKKNIKISSIRSGNIIGEHKIIFSFLGEKIEITHQAYNRKIFALGAIKAAIWLSNKKTGLFNMSHILNKQAKNFKSN</sequence>
<accession>Q8D3H6</accession>
<organism>
    <name type="scientific">Wigglesworthia glossinidia brevipalpis</name>
    <dbReference type="NCBI Taxonomy" id="36870"/>
    <lineage>
        <taxon>Bacteria</taxon>
        <taxon>Pseudomonadati</taxon>
        <taxon>Pseudomonadota</taxon>
        <taxon>Gammaproteobacteria</taxon>
        <taxon>Enterobacterales</taxon>
        <taxon>Erwiniaceae</taxon>
        <taxon>Wigglesworthia</taxon>
    </lineage>
</organism>
<comment type="function">
    <text evidence="1">Catalyzes the conversion of 4-hydroxy-tetrahydrodipicolinate (HTPA) to tetrahydrodipicolinate.</text>
</comment>
<comment type="catalytic activity">
    <reaction evidence="1">
        <text>(S)-2,3,4,5-tetrahydrodipicolinate + NAD(+) + H2O = (2S,4S)-4-hydroxy-2,3,4,5-tetrahydrodipicolinate + NADH + H(+)</text>
        <dbReference type="Rhea" id="RHEA:35323"/>
        <dbReference type="ChEBI" id="CHEBI:15377"/>
        <dbReference type="ChEBI" id="CHEBI:15378"/>
        <dbReference type="ChEBI" id="CHEBI:16845"/>
        <dbReference type="ChEBI" id="CHEBI:57540"/>
        <dbReference type="ChEBI" id="CHEBI:57945"/>
        <dbReference type="ChEBI" id="CHEBI:67139"/>
        <dbReference type="EC" id="1.17.1.8"/>
    </reaction>
</comment>
<comment type="catalytic activity">
    <reaction evidence="1">
        <text>(S)-2,3,4,5-tetrahydrodipicolinate + NADP(+) + H2O = (2S,4S)-4-hydroxy-2,3,4,5-tetrahydrodipicolinate + NADPH + H(+)</text>
        <dbReference type="Rhea" id="RHEA:35331"/>
        <dbReference type="ChEBI" id="CHEBI:15377"/>
        <dbReference type="ChEBI" id="CHEBI:15378"/>
        <dbReference type="ChEBI" id="CHEBI:16845"/>
        <dbReference type="ChEBI" id="CHEBI:57783"/>
        <dbReference type="ChEBI" id="CHEBI:58349"/>
        <dbReference type="ChEBI" id="CHEBI:67139"/>
        <dbReference type="EC" id="1.17.1.8"/>
    </reaction>
</comment>
<comment type="pathway">
    <text evidence="1">Amino-acid biosynthesis; L-lysine biosynthesis via DAP pathway; (S)-tetrahydrodipicolinate from L-aspartate: step 4/4.</text>
</comment>
<comment type="subunit">
    <text evidence="1">Homotetramer.</text>
</comment>
<comment type="subcellular location">
    <subcellularLocation>
        <location evidence="1">Cytoplasm</location>
    </subcellularLocation>
</comment>
<comment type="similarity">
    <text evidence="1">Belongs to the DapB family.</text>
</comment>
<comment type="caution">
    <text evidence="2">Was originally thought to be a dihydrodipicolinate reductase (DHDPR), catalyzing the conversion of dihydrodipicolinate to tetrahydrodipicolinate. However, it was shown in E.coli that the substrate of the enzymatic reaction is not dihydrodipicolinate (DHDP) but in fact (2S,4S)-4-hydroxy-2,3,4,5-tetrahydrodipicolinic acid (HTPA), the product released by the DapA-catalyzed reaction.</text>
</comment>
<protein>
    <recommendedName>
        <fullName evidence="1">4-hydroxy-tetrahydrodipicolinate reductase</fullName>
        <shortName evidence="1">HTPA reductase</shortName>
        <ecNumber evidence="1">1.17.1.8</ecNumber>
    </recommendedName>
</protein>
<feature type="chain" id="PRO_0000141508" description="4-hydroxy-tetrahydrodipicolinate reductase">
    <location>
        <begin position="1"/>
        <end position="265"/>
    </location>
</feature>
<feature type="active site" description="Proton donor/acceptor" evidence="1">
    <location>
        <position position="164"/>
    </location>
</feature>
<feature type="active site" description="Proton donor" evidence="1">
    <location>
        <position position="168"/>
    </location>
</feature>
<feature type="binding site" evidence="1">
    <location>
        <begin position="16"/>
        <end position="21"/>
    </location>
    <ligand>
        <name>NAD(+)</name>
        <dbReference type="ChEBI" id="CHEBI:57540"/>
    </ligand>
</feature>
<feature type="binding site" evidence="1">
    <location>
        <position position="43"/>
    </location>
    <ligand>
        <name>NADP(+)</name>
        <dbReference type="ChEBI" id="CHEBI:58349"/>
    </ligand>
</feature>
<feature type="binding site" evidence="1">
    <location>
        <begin position="106"/>
        <end position="108"/>
    </location>
    <ligand>
        <name>NAD(+)</name>
        <dbReference type="ChEBI" id="CHEBI:57540"/>
    </ligand>
</feature>
<feature type="binding site" evidence="1">
    <location>
        <begin position="130"/>
        <end position="133"/>
    </location>
    <ligand>
        <name>NAD(+)</name>
        <dbReference type="ChEBI" id="CHEBI:57540"/>
    </ligand>
</feature>
<feature type="binding site" evidence="1">
    <location>
        <position position="165"/>
    </location>
    <ligand>
        <name>(S)-2,3,4,5-tetrahydrodipicolinate</name>
        <dbReference type="ChEBI" id="CHEBI:16845"/>
    </ligand>
</feature>
<feature type="binding site" evidence="1">
    <location>
        <begin position="174"/>
        <end position="175"/>
    </location>
    <ligand>
        <name>(S)-2,3,4,5-tetrahydrodipicolinate</name>
        <dbReference type="ChEBI" id="CHEBI:16845"/>
    </ligand>
</feature>
<name>DAPB_WIGBR</name>
<gene>
    <name evidence="1" type="primary">dapB</name>
    <name type="ordered locus">WIGBR0250</name>
</gene>
<evidence type="ECO:0000255" key="1">
    <source>
        <dbReference type="HAMAP-Rule" id="MF_00102"/>
    </source>
</evidence>
<evidence type="ECO:0000305" key="2"/>